<keyword id="KW-0150">Chloroplast</keyword>
<keyword id="KW-0240">DNA-directed RNA polymerase</keyword>
<keyword id="KW-0548">Nucleotidyltransferase</keyword>
<keyword id="KW-0934">Plastid</keyword>
<keyword id="KW-0804">Transcription</keyword>
<keyword id="KW-0808">Transferase</keyword>
<protein>
    <recommendedName>
        <fullName evidence="1">DNA-directed RNA polymerase subunit alpha</fullName>
        <shortName evidence="1">PEP</shortName>
        <ecNumber evidence="1">2.7.7.6</ecNumber>
    </recommendedName>
    <alternativeName>
        <fullName evidence="1">Plastid-encoded RNA polymerase subunit alpha</fullName>
        <shortName evidence="1">RNA polymerase subunit alpha</shortName>
    </alternativeName>
</protein>
<feature type="chain" id="PRO_0000236290" description="DNA-directed RNA polymerase subunit alpha">
    <location>
        <begin position="1"/>
        <end position="311"/>
    </location>
</feature>
<feature type="region of interest" description="Alpha N-terminal domain (alpha-NTD)" evidence="1">
    <location>
        <begin position="1"/>
        <end position="227"/>
    </location>
</feature>
<feature type="region of interest" description="Alpha C-terminal domain (alpha-CTD)" evidence="1">
    <location>
        <begin position="239"/>
        <end position="311"/>
    </location>
</feature>
<name>RPOA_PYRYE</name>
<evidence type="ECO:0000255" key="1">
    <source>
        <dbReference type="HAMAP-Rule" id="MF_00059"/>
    </source>
</evidence>
<reference key="1">
    <citation type="submission" date="2006-09" db="EMBL/GenBank/DDBJ databases">
        <title>Cloning and analysis of the Porphyra yezoensis gene for rpoA.</title>
        <authorList>
            <person name="Wang M.Q."/>
            <person name="Mao Y.X."/>
        </authorList>
    </citation>
    <scope>NUCLEOTIDE SEQUENCE [GENOMIC DNA]</scope>
    <source>
        <strain>Qingdao</strain>
    </source>
</reference>
<reference key="2">
    <citation type="submission" date="2003-11" db="EMBL/GenBank/DDBJ databases">
        <title>Whole genome sequence of Porphyra yezoensis chloroplast.</title>
        <authorList>
            <person name="Kunimoto M."/>
            <person name="Morishima K."/>
            <person name="Yoshikawa M."/>
            <person name="Fukuda S."/>
            <person name="Kobayashi T."/>
            <person name="Kobayashi M."/>
            <person name="Okazaki T."/>
            <person name="Ohara I."/>
            <person name="Nakayama I."/>
        </authorList>
    </citation>
    <scope>NUCLEOTIDE SEQUENCE [LARGE SCALE GENOMIC DNA]</scope>
    <source>
        <strain>U-51</strain>
    </source>
</reference>
<comment type="function">
    <text evidence="1">DNA-dependent RNA polymerase catalyzes the transcription of DNA into RNA using the four ribonucleoside triphosphates as substrates.</text>
</comment>
<comment type="catalytic activity">
    <reaction evidence="1">
        <text>RNA(n) + a ribonucleoside 5'-triphosphate = RNA(n+1) + diphosphate</text>
        <dbReference type="Rhea" id="RHEA:21248"/>
        <dbReference type="Rhea" id="RHEA-COMP:14527"/>
        <dbReference type="Rhea" id="RHEA-COMP:17342"/>
        <dbReference type="ChEBI" id="CHEBI:33019"/>
        <dbReference type="ChEBI" id="CHEBI:61557"/>
        <dbReference type="ChEBI" id="CHEBI:140395"/>
        <dbReference type="EC" id="2.7.7.6"/>
    </reaction>
</comment>
<comment type="subunit">
    <text evidence="1">In plastids the minimal PEP RNA polymerase catalytic core is composed of four subunits: alpha, beta, beta', and beta''. When a (nuclear-encoded) sigma factor is associated with the core the holoenzyme is formed, which can initiate transcription.</text>
</comment>
<comment type="subcellular location">
    <subcellularLocation>
        <location>Plastid</location>
        <location>Chloroplast</location>
    </subcellularLocation>
</comment>
<comment type="domain">
    <text evidence="1">The N-terminal domain is essential for RNAP assembly and basal transcription, whereas the C-terminal domain is involved in interaction with transcriptional regulators and with upstream promoter elements.</text>
</comment>
<comment type="similarity">
    <text evidence="1">Belongs to the RNA polymerase alpha chain family.</text>
</comment>
<sequence>MAQFQIECIESRTDGARGQYGSFVIEPLNQGQGITLGNALRRSILSDLEGTAIVAVRIAGVNHEFSTIPGVREDVLEILLNLKEVVFKSYNKESQIGRIRVQGPAIVTAGLFELSSDIEVVDPRQYIATICNNTIFEMEFKIEKNCGYRLAEKAVDELSVDFLQVDSVFMPVNKVNYKVEEVRIGSNSIKDRLIIQIWTNGSISPQEAISQGATVLTNLFCSLRNLDFKSADNYRSKEDKKISQVLIEELQLSVRAYNCLKRAQIHSIADLLDYSQEELLEIKNFGQKSAEEVIYALQKKLGISLPKEKSD</sequence>
<dbReference type="EC" id="2.7.7.6" evidence="1"/>
<dbReference type="EMBL" id="DQ995186">
    <property type="protein sequence ID" value="ABJ91301.1"/>
    <property type="molecule type" value="Genomic_DNA"/>
</dbReference>
<dbReference type="EMBL" id="AP006715">
    <property type="protein sequence ID" value="BAE92416.1"/>
    <property type="molecule type" value="Genomic_DNA"/>
</dbReference>
<dbReference type="RefSeq" id="YP_536973.1">
    <property type="nucleotide sequence ID" value="NC_007932.1"/>
</dbReference>
<dbReference type="SMR" id="Q1XDJ5"/>
<dbReference type="GeneID" id="3978928"/>
<dbReference type="GO" id="GO:0009507">
    <property type="term" value="C:chloroplast"/>
    <property type="evidence" value="ECO:0007669"/>
    <property type="project" value="UniProtKB-SubCell"/>
</dbReference>
<dbReference type="GO" id="GO:0000428">
    <property type="term" value="C:DNA-directed RNA polymerase complex"/>
    <property type="evidence" value="ECO:0007669"/>
    <property type="project" value="UniProtKB-KW"/>
</dbReference>
<dbReference type="GO" id="GO:0005739">
    <property type="term" value="C:mitochondrion"/>
    <property type="evidence" value="ECO:0007669"/>
    <property type="project" value="GOC"/>
</dbReference>
<dbReference type="GO" id="GO:0003677">
    <property type="term" value="F:DNA binding"/>
    <property type="evidence" value="ECO:0007669"/>
    <property type="project" value="UniProtKB-UniRule"/>
</dbReference>
<dbReference type="GO" id="GO:0003899">
    <property type="term" value="F:DNA-directed RNA polymerase activity"/>
    <property type="evidence" value="ECO:0007669"/>
    <property type="project" value="UniProtKB-UniRule"/>
</dbReference>
<dbReference type="GO" id="GO:0046983">
    <property type="term" value="F:protein dimerization activity"/>
    <property type="evidence" value="ECO:0007669"/>
    <property type="project" value="InterPro"/>
</dbReference>
<dbReference type="GO" id="GO:0006351">
    <property type="term" value="P:DNA-templated transcription"/>
    <property type="evidence" value="ECO:0007669"/>
    <property type="project" value="UniProtKB-UniRule"/>
</dbReference>
<dbReference type="CDD" id="cd06928">
    <property type="entry name" value="RNAP_alpha_NTD"/>
    <property type="match status" value="1"/>
</dbReference>
<dbReference type="FunFam" id="2.170.120.12:FF:000001">
    <property type="entry name" value="DNA-directed RNA polymerase subunit alpha"/>
    <property type="match status" value="1"/>
</dbReference>
<dbReference type="Gene3D" id="1.10.150.20">
    <property type="entry name" value="5' to 3' exonuclease, C-terminal subdomain"/>
    <property type="match status" value="1"/>
</dbReference>
<dbReference type="Gene3D" id="2.170.120.12">
    <property type="entry name" value="DNA-directed RNA polymerase, insert domain"/>
    <property type="match status" value="1"/>
</dbReference>
<dbReference type="Gene3D" id="3.30.1360.10">
    <property type="entry name" value="RNA polymerase, RBP11-like subunit"/>
    <property type="match status" value="1"/>
</dbReference>
<dbReference type="HAMAP" id="MF_00059">
    <property type="entry name" value="RNApol_bact_RpoA"/>
    <property type="match status" value="1"/>
</dbReference>
<dbReference type="InterPro" id="IPR011262">
    <property type="entry name" value="DNA-dir_RNA_pol_insert"/>
</dbReference>
<dbReference type="InterPro" id="IPR011263">
    <property type="entry name" value="DNA-dir_RNA_pol_RpoA/D/Rpb3"/>
</dbReference>
<dbReference type="InterPro" id="IPR011773">
    <property type="entry name" value="DNA-dir_RpoA"/>
</dbReference>
<dbReference type="InterPro" id="IPR036603">
    <property type="entry name" value="RBP11-like"/>
</dbReference>
<dbReference type="InterPro" id="IPR011260">
    <property type="entry name" value="RNAP_asu_C"/>
</dbReference>
<dbReference type="InterPro" id="IPR036643">
    <property type="entry name" value="RNApol_insert_sf"/>
</dbReference>
<dbReference type="NCBIfam" id="NF003516">
    <property type="entry name" value="PRK05182.2-2"/>
    <property type="match status" value="1"/>
</dbReference>
<dbReference type="NCBIfam" id="NF003519">
    <property type="entry name" value="PRK05182.2-5"/>
    <property type="match status" value="1"/>
</dbReference>
<dbReference type="NCBIfam" id="TIGR02027">
    <property type="entry name" value="rpoA"/>
    <property type="match status" value="1"/>
</dbReference>
<dbReference type="Pfam" id="PF01000">
    <property type="entry name" value="RNA_pol_A_bac"/>
    <property type="match status" value="1"/>
</dbReference>
<dbReference type="Pfam" id="PF03118">
    <property type="entry name" value="RNA_pol_A_CTD"/>
    <property type="match status" value="1"/>
</dbReference>
<dbReference type="Pfam" id="PF01193">
    <property type="entry name" value="RNA_pol_L"/>
    <property type="match status" value="1"/>
</dbReference>
<dbReference type="SMART" id="SM00662">
    <property type="entry name" value="RPOLD"/>
    <property type="match status" value="1"/>
</dbReference>
<dbReference type="SUPFAM" id="SSF47789">
    <property type="entry name" value="C-terminal domain of RNA polymerase alpha subunit"/>
    <property type="match status" value="1"/>
</dbReference>
<dbReference type="SUPFAM" id="SSF56553">
    <property type="entry name" value="Insert subdomain of RNA polymerase alpha subunit"/>
    <property type="match status" value="1"/>
</dbReference>
<dbReference type="SUPFAM" id="SSF55257">
    <property type="entry name" value="RBP11-like subunits of RNA polymerase"/>
    <property type="match status" value="1"/>
</dbReference>
<organism>
    <name type="scientific">Pyropia yezoensis</name>
    <name type="common">Susabi-nori</name>
    <name type="synonym">Porphyra yezoensis</name>
    <dbReference type="NCBI Taxonomy" id="2788"/>
    <lineage>
        <taxon>Eukaryota</taxon>
        <taxon>Rhodophyta</taxon>
        <taxon>Bangiophyceae</taxon>
        <taxon>Bangiales</taxon>
        <taxon>Bangiaceae</taxon>
        <taxon>Pyropia</taxon>
    </lineage>
</organism>
<gene>
    <name evidence="1" type="primary">rpoA</name>
</gene>
<proteinExistence type="inferred from homology"/>
<geneLocation type="chloroplast"/>
<accession>Q1XDJ5</accession>
<accession>A0MM93</accession>